<proteinExistence type="inferred from homology"/>
<gene>
    <name evidence="1" type="primary">nuoB</name>
    <name type="ordered locus">A1S_0753</name>
</gene>
<comment type="function">
    <text evidence="1">NDH-1 shuttles electrons from NADH, via FMN and iron-sulfur (Fe-S) centers, to quinones in the respiratory chain. The immediate electron acceptor for the enzyme in this species is believed to be ubiquinone. Couples the redox reaction to proton translocation (for every two electrons transferred, four hydrogen ions are translocated across the cytoplasmic membrane), and thus conserves the redox energy in a proton gradient.</text>
</comment>
<comment type="catalytic activity">
    <reaction evidence="1">
        <text>a quinone + NADH + 5 H(+)(in) = a quinol + NAD(+) + 4 H(+)(out)</text>
        <dbReference type="Rhea" id="RHEA:57888"/>
        <dbReference type="ChEBI" id="CHEBI:15378"/>
        <dbReference type="ChEBI" id="CHEBI:24646"/>
        <dbReference type="ChEBI" id="CHEBI:57540"/>
        <dbReference type="ChEBI" id="CHEBI:57945"/>
        <dbReference type="ChEBI" id="CHEBI:132124"/>
    </reaction>
</comment>
<comment type="cofactor">
    <cofactor evidence="1">
        <name>[4Fe-4S] cluster</name>
        <dbReference type="ChEBI" id="CHEBI:49883"/>
    </cofactor>
    <text evidence="1">Binds 1 [4Fe-4S] cluster.</text>
</comment>
<comment type="subunit">
    <text evidence="1">NDH-1 is composed of 14 different subunits. Subunits NuoB, C, D, E, F, and G constitute the peripheral sector of the complex.</text>
</comment>
<comment type="subcellular location">
    <subcellularLocation>
        <location evidence="1">Cell inner membrane</location>
        <topology evidence="1">Peripheral membrane protein</topology>
        <orientation evidence="1">Cytoplasmic side</orientation>
    </subcellularLocation>
</comment>
<comment type="similarity">
    <text evidence="1">Belongs to the complex I 20 kDa subunit family.</text>
</comment>
<organism>
    <name type="scientific">Acinetobacter baumannii (strain ATCC 17978 / DSM 105126 / CIP 53.77 / LMG 1025 / NCDC KC755 / 5377)</name>
    <dbReference type="NCBI Taxonomy" id="400667"/>
    <lineage>
        <taxon>Bacteria</taxon>
        <taxon>Pseudomonadati</taxon>
        <taxon>Pseudomonadota</taxon>
        <taxon>Gammaproteobacteria</taxon>
        <taxon>Moraxellales</taxon>
        <taxon>Moraxellaceae</taxon>
        <taxon>Acinetobacter</taxon>
        <taxon>Acinetobacter calcoaceticus/baumannii complex</taxon>
    </lineage>
</organism>
<reference key="1">
    <citation type="journal article" date="2007" name="Genes Dev.">
        <title>New insights into Acinetobacter baumannii pathogenesis revealed by high-density pyrosequencing and transposon mutagenesis.</title>
        <authorList>
            <person name="Smith M.G."/>
            <person name="Gianoulis T.A."/>
            <person name="Pukatzki S."/>
            <person name="Mekalanos J.J."/>
            <person name="Ornston L.N."/>
            <person name="Gerstein M."/>
            <person name="Snyder M."/>
        </authorList>
    </citation>
    <scope>NUCLEOTIDE SEQUENCE [LARGE SCALE GENOMIC DNA]</scope>
    <source>
        <strain>ATCC 17978 / DSM 105126 / CIP 53.77 / LMG 1025 / NCDC KC755 / 5377</strain>
    </source>
</reference>
<accession>A3M2P9</accession>
<sequence>MKYTLTRANPDADQYPLQDRQIVTDPLEEEVNKNVFMTRLEDVLHTAVNWGRKNSLWPFNFGTSCCYVEYATTLTGVHDLSRFGAEVIRASPRQADLMIVAGTCFVKMAPVIQRLYEQMLEPKWVISMGACANSGGMYDIYSVVQGVDKIIPVDVYVPGCPPRPEALIQALMLLQDQIQLERRPLSAVIGDDLQPVYKPKMMPERDRKNAQRIAVKNLRSMDEIK</sequence>
<feature type="chain" id="PRO_0000376107" description="NADH-quinone oxidoreductase subunit B">
    <location>
        <begin position="1"/>
        <end position="225"/>
    </location>
</feature>
<feature type="binding site" evidence="1">
    <location>
        <position position="65"/>
    </location>
    <ligand>
        <name>[4Fe-4S] cluster</name>
        <dbReference type="ChEBI" id="CHEBI:49883"/>
    </ligand>
</feature>
<feature type="binding site" evidence="1">
    <location>
        <position position="66"/>
    </location>
    <ligand>
        <name>[4Fe-4S] cluster</name>
        <dbReference type="ChEBI" id="CHEBI:49883"/>
    </ligand>
</feature>
<feature type="binding site" evidence="1">
    <location>
        <position position="131"/>
    </location>
    <ligand>
        <name>[4Fe-4S] cluster</name>
        <dbReference type="ChEBI" id="CHEBI:49883"/>
    </ligand>
</feature>
<feature type="binding site" evidence="1">
    <location>
        <position position="160"/>
    </location>
    <ligand>
        <name>[4Fe-4S] cluster</name>
        <dbReference type="ChEBI" id="CHEBI:49883"/>
    </ligand>
</feature>
<dbReference type="EC" id="7.1.1.-" evidence="1"/>
<dbReference type="EMBL" id="CP000521">
    <property type="protein sequence ID" value="ABO11193.2"/>
    <property type="molecule type" value="Genomic_DNA"/>
</dbReference>
<dbReference type="RefSeq" id="WP_000878003.1">
    <property type="nucleotide sequence ID" value="NZ_CP053098.1"/>
</dbReference>
<dbReference type="SMR" id="A3M2P9"/>
<dbReference type="KEGG" id="acb:A1S_0753"/>
<dbReference type="HOGENOM" id="CLU_055737_7_3_6"/>
<dbReference type="GO" id="GO:0005886">
    <property type="term" value="C:plasma membrane"/>
    <property type="evidence" value="ECO:0007669"/>
    <property type="project" value="UniProtKB-SubCell"/>
</dbReference>
<dbReference type="GO" id="GO:0045271">
    <property type="term" value="C:respiratory chain complex I"/>
    <property type="evidence" value="ECO:0007669"/>
    <property type="project" value="TreeGrafter"/>
</dbReference>
<dbReference type="GO" id="GO:0051539">
    <property type="term" value="F:4 iron, 4 sulfur cluster binding"/>
    <property type="evidence" value="ECO:0007669"/>
    <property type="project" value="UniProtKB-KW"/>
</dbReference>
<dbReference type="GO" id="GO:0005506">
    <property type="term" value="F:iron ion binding"/>
    <property type="evidence" value="ECO:0007669"/>
    <property type="project" value="UniProtKB-UniRule"/>
</dbReference>
<dbReference type="GO" id="GO:0008137">
    <property type="term" value="F:NADH dehydrogenase (ubiquinone) activity"/>
    <property type="evidence" value="ECO:0007669"/>
    <property type="project" value="InterPro"/>
</dbReference>
<dbReference type="GO" id="GO:0050136">
    <property type="term" value="F:NADH:ubiquinone reductase (non-electrogenic) activity"/>
    <property type="evidence" value="ECO:0007669"/>
    <property type="project" value="UniProtKB-UniRule"/>
</dbReference>
<dbReference type="GO" id="GO:0048038">
    <property type="term" value="F:quinone binding"/>
    <property type="evidence" value="ECO:0007669"/>
    <property type="project" value="UniProtKB-KW"/>
</dbReference>
<dbReference type="GO" id="GO:0009060">
    <property type="term" value="P:aerobic respiration"/>
    <property type="evidence" value="ECO:0007669"/>
    <property type="project" value="TreeGrafter"/>
</dbReference>
<dbReference type="GO" id="GO:0015990">
    <property type="term" value="P:electron transport coupled proton transport"/>
    <property type="evidence" value="ECO:0007669"/>
    <property type="project" value="TreeGrafter"/>
</dbReference>
<dbReference type="FunFam" id="3.40.50.12280:FF:000002">
    <property type="entry name" value="NADH-quinone oxidoreductase subunit B"/>
    <property type="match status" value="1"/>
</dbReference>
<dbReference type="Gene3D" id="3.40.50.12280">
    <property type="match status" value="1"/>
</dbReference>
<dbReference type="HAMAP" id="MF_01356">
    <property type="entry name" value="NDH1_NuoB"/>
    <property type="match status" value="1"/>
</dbReference>
<dbReference type="InterPro" id="IPR006137">
    <property type="entry name" value="NADH_UbQ_OxRdtase-like_20kDa"/>
</dbReference>
<dbReference type="InterPro" id="IPR006138">
    <property type="entry name" value="NADH_UQ_OxRdtase_20Kd_su"/>
</dbReference>
<dbReference type="NCBIfam" id="TIGR01957">
    <property type="entry name" value="nuoB_fam"/>
    <property type="match status" value="1"/>
</dbReference>
<dbReference type="NCBIfam" id="NF005012">
    <property type="entry name" value="PRK06411.1"/>
    <property type="match status" value="1"/>
</dbReference>
<dbReference type="PANTHER" id="PTHR11995">
    <property type="entry name" value="NADH DEHYDROGENASE"/>
    <property type="match status" value="1"/>
</dbReference>
<dbReference type="PANTHER" id="PTHR11995:SF14">
    <property type="entry name" value="NADH DEHYDROGENASE [UBIQUINONE] IRON-SULFUR PROTEIN 7, MITOCHONDRIAL"/>
    <property type="match status" value="1"/>
</dbReference>
<dbReference type="Pfam" id="PF01058">
    <property type="entry name" value="Oxidored_q6"/>
    <property type="match status" value="1"/>
</dbReference>
<dbReference type="SUPFAM" id="SSF56770">
    <property type="entry name" value="HydA/Nqo6-like"/>
    <property type="match status" value="1"/>
</dbReference>
<dbReference type="PROSITE" id="PS01150">
    <property type="entry name" value="COMPLEX1_20K"/>
    <property type="match status" value="1"/>
</dbReference>
<evidence type="ECO:0000255" key="1">
    <source>
        <dbReference type="HAMAP-Rule" id="MF_01356"/>
    </source>
</evidence>
<keyword id="KW-0004">4Fe-4S</keyword>
<keyword id="KW-0997">Cell inner membrane</keyword>
<keyword id="KW-1003">Cell membrane</keyword>
<keyword id="KW-0408">Iron</keyword>
<keyword id="KW-0411">Iron-sulfur</keyword>
<keyword id="KW-0472">Membrane</keyword>
<keyword id="KW-0479">Metal-binding</keyword>
<keyword id="KW-0520">NAD</keyword>
<keyword id="KW-0874">Quinone</keyword>
<keyword id="KW-1278">Translocase</keyword>
<keyword id="KW-0813">Transport</keyword>
<keyword id="KW-0830">Ubiquinone</keyword>
<name>NUOB_ACIBT</name>
<protein>
    <recommendedName>
        <fullName evidence="1">NADH-quinone oxidoreductase subunit B</fullName>
        <ecNumber evidence="1">7.1.1.-</ecNumber>
    </recommendedName>
    <alternativeName>
        <fullName evidence="1">NADH dehydrogenase I subunit B</fullName>
    </alternativeName>
    <alternativeName>
        <fullName evidence="1">NDH-1 subunit B</fullName>
    </alternativeName>
</protein>